<name>SRKA_ECOLI</name>
<gene>
    <name evidence="1 6" type="primary">srkA</name>
    <name type="synonym">rdoA</name>
    <name type="synonym">yihE</name>
    <name type="ordered locus">b3859</name>
    <name type="ordered locus">JW3831</name>
</gene>
<comment type="function">
    <text evidence="1 2 3 4">A protein kinase that (auto)phosphorylates on Ser and Thr residues (PubMed:17302814). Probably acts to suppress the effects of stress linked to accumulation of reactive oxygen species. Protects cells from stress by antagonizing the MazE-MazF TA module, probably indirectly as it has not been seen to phosphorylate MazE, MazF or MazG (PubMed:23416055). Probably involved in the extracytoplasmic stress response (PubMed:9159398).</text>
</comment>
<comment type="catalytic activity">
    <reaction evidence="1 2">
        <text>L-seryl-[protein] + ATP = O-phospho-L-seryl-[protein] + ADP + H(+)</text>
        <dbReference type="Rhea" id="RHEA:17989"/>
        <dbReference type="Rhea" id="RHEA-COMP:9863"/>
        <dbReference type="Rhea" id="RHEA-COMP:11604"/>
        <dbReference type="ChEBI" id="CHEBI:15378"/>
        <dbReference type="ChEBI" id="CHEBI:29999"/>
        <dbReference type="ChEBI" id="CHEBI:30616"/>
        <dbReference type="ChEBI" id="CHEBI:83421"/>
        <dbReference type="ChEBI" id="CHEBI:456216"/>
        <dbReference type="EC" id="2.7.11.1"/>
    </reaction>
</comment>
<comment type="catalytic activity">
    <reaction evidence="1 2">
        <text>L-threonyl-[protein] + ATP = O-phospho-L-threonyl-[protein] + ADP + H(+)</text>
        <dbReference type="Rhea" id="RHEA:46608"/>
        <dbReference type="Rhea" id="RHEA-COMP:11060"/>
        <dbReference type="Rhea" id="RHEA-COMP:11605"/>
        <dbReference type="ChEBI" id="CHEBI:15378"/>
        <dbReference type="ChEBI" id="CHEBI:30013"/>
        <dbReference type="ChEBI" id="CHEBI:30616"/>
        <dbReference type="ChEBI" id="CHEBI:61977"/>
        <dbReference type="ChEBI" id="CHEBI:456216"/>
        <dbReference type="EC" id="2.7.11.1"/>
    </reaction>
</comment>
<comment type="cofactor">
    <cofactor evidence="8">
        <name>Mg(2+)</name>
        <dbReference type="ChEBI" id="CHEBI:18420"/>
    </cofactor>
    <text evidence="8">May bind 2 Mg(2+) ions.</text>
</comment>
<comment type="subunit">
    <text evidence="1 2">Monomer.</text>
</comment>
<comment type="subcellular location">
    <subcellularLocation>
        <location evidence="1 8">Cytoplasm</location>
    </subcellularLocation>
</comment>
<comment type="induction">
    <text evidence="4">Induced by the two-component Cpx system that responds to extracellular stress.</text>
</comment>
<comment type="disruption phenotype">
    <text evidence="3">A hyperlethal phenotype (reduced survival in the presence of antibiotic but no change in minimal inhibitory concentration) for a number of antimicrobials including nalidixic acid, tetracycline, ampicillin and mitomycin C as well as exposure to UV light and H(2)O(2). Lethality is mitigated by pretreatment with 2,2'-bipyridyl and thiourea, which inhibit hydroxyl radical accumulation. No change in cell survival upon heat shock (up to 55 degrees Celsius), rifampicin or fluoroquinolone PD161144 treatment. A triple srkA-mazE-mazF disruption mutant shows no hyperlethality in the presence of nalidixic acid or UV light, suggesting SrkA has a negative effect on MazF. Double katG-srkA and double cpxR-srkA disruption mutants are as sensitive to killing as single srkA mutants; i.e. all 3 genes are epistatic and function in the same genetic pathway.</text>
</comment>
<comment type="similarity">
    <text evidence="1">Belongs to the SrkA/RdoA protein kinase family.</text>
</comment>
<reference key="1">
    <citation type="journal article" date="1994" name="Microbiology">
        <title>The Escherichia coli dsbA gene is partly transcribed from the promoter of a weakly expressed upstream gene.</title>
        <authorList>
            <person name="Belin P."/>
            <person name="Boquet P.L."/>
        </authorList>
    </citation>
    <scope>NUCLEOTIDE SEQUENCE [GENOMIC DNA]</scope>
    <source>
        <strain>K12</strain>
    </source>
</reference>
<reference key="2">
    <citation type="journal article" date="1993" name="Nucleic Acids Res.">
        <title>Analysis of the Escherichia coli genome. III. DNA sequence of the region from 87.2 to 89.2 minutes.</title>
        <authorList>
            <person name="Plunkett G. III"/>
            <person name="Burland V."/>
            <person name="Daniels D.L."/>
            <person name="Blattner F.R."/>
        </authorList>
    </citation>
    <scope>NUCLEOTIDE SEQUENCE [LARGE SCALE GENOMIC DNA]</scope>
    <source>
        <strain>K12 / MG1655 / ATCC 47076</strain>
    </source>
</reference>
<reference key="3">
    <citation type="journal article" date="1997" name="Science">
        <title>The complete genome sequence of Escherichia coli K-12.</title>
        <authorList>
            <person name="Blattner F.R."/>
            <person name="Plunkett G. III"/>
            <person name="Bloch C.A."/>
            <person name="Perna N.T."/>
            <person name="Burland V."/>
            <person name="Riley M."/>
            <person name="Collado-Vides J."/>
            <person name="Glasner J.D."/>
            <person name="Rode C.K."/>
            <person name="Mayhew G.F."/>
            <person name="Gregor J."/>
            <person name="Davis N.W."/>
            <person name="Kirkpatrick H.A."/>
            <person name="Goeden M.A."/>
            <person name="Rose D.J."/>
            <person name="Mau B."/>
            <person name="Shao Y."/>
        </authorList>
    </citation>
    <scope>NUCLEOTIDE SEQUENCE [LARGE SCALE GENOMIC DNA]</scope>
    <source>
        <strain>K12 / MG1655 / ATCC 47076</strain>
    </source>
</reference>
<reference key="4">
    <citation type="journal article" date="2006" name="Mol. Syst. Biol.">
        <title>Highly accurate genome sequences of Escherichia coli K-12 strains MG1655 and W3110.</title>
        <authorList>
            <person name="Hayashi K."/>
            <person name="Morooka N."/>
            <person name="Yamamoto Y."/>
            <person name="Fujita K."/>
            <person name="Isono K."/>
            <person name="Choi S."/>
            <person name="Ohtsubo E."/>
            <person name="Baba T."/>
            <person name="Wanner B.L."/>
            <person name="Mori H."/>
            <person name="Horiuchi T."/>
        </authorList>
    </citation>
    <scope>NUCLEOTIDE SEQUENCE [LARGE SCALE GENOMIC DNA]</scope>
    <source>
        <strain>K12 / W3110 / ATCC 27325 / DSM 5911</strain>
    </source>
</reference>
<reference key="5">
    <citation type="journal article" date="1997" name="Genes Dev.">
        <title>Regulation of Escherichia coli cell envelope proteins involved in protein folding and degradation by the Cpx two-component system.</title>
        <authorList>
            <person name="Pogliano J."/>
            <person name="Lynch A.S."/>
            <person name="Belin D."/>
            <person name="Lin E.C."/>
            <person name="Beckwith J."/>
        </authorList>
    </citation>
    <scope>FUNCTION</scope>
    <scope>INDUCTION BY CPX</scope>
    <source>
        <strain>K12 / MC4100 / ATCC 35695 / DSM 6574</strain>
    </source>
</reference>
<reference key="6">
    <citation type="journal article" date="2013" name="Cell Rep.">
        <title>YihE kinase is a central regulator of programmed cell death in bacteria.</title>
        <authorList>
            <person name="Dorsey-Oresto A."/>
            <person name="Lu T."/>
            <person name="Mosel M."/>
            <person name="Wang X."/>
            <person name="Salz T."/>
            <person name="Drlica K."/>
            <person name="Zhao X."/>
        </authorList>
    </citation>
    <scope>FUNCTION</scope>
    <scope>DISRUPTION PHENOTYPE</scope>
    <scope>MUTAGENESIS OF SER-36 AND ASP-217</scope>
    <source>
        <strain>K12 / MG1655 / ATCC 47076</strain>
    </source>
</reference>
<reference key="7">
    <citation type="journal article" date="2007" name="Mol. Microbiol.">
        <title>Crystal structure of a novel prokaryotic Ser/Thr kinase and its implication in the Cpx stress response pathway.</title>
        <authorList>
            <person name="Zheng J."/>
            <person name="He C."/>
            <person name="Singh V.K."/>
            <person name="Martin N.L."/>
            <person name="Jia Z."/>
        </authorList>
    </citation>
    <scope>X-RAY CRYSTALLOGRAPHY (2.80 ANGSTROMS)</scope>
    <scope>FUNCTION</scope>
    <scope>CATALYTIC ACTIVITY</scope>
    <scope>POSSIBLE COFACTOR</scope>
    <scope>SUBUNIT</scope>
    <scope>SUBCELLULAR LOCATION</scope>
    <scope>MUTAGENESIS OF ASP-217</scope>
</reference>
<protein>
    <recommendedName>
        <fullName evidence="1 6">Stress response kinase A</fullName>
        <ecNumber evidence="1 2">2.7.11.1</ecNumber>
    </recommendedName>
    <alternativeName>
        <fullName evidence="5">Serine/threonine protein kinase YihE</fullName>
    </alternativeName>
    <alternativeName>
        <fullName evidence="1 7">Serine/threonine-protein kinase SrkA</fullName>
    </alternativeName>
</protein>
<evidence type="ECO:0000255" key="1">
    <source>
        <dbReference type="HAMAP-Rule" id="MF_01497"/>
    </source>
</evidence>
<evidence type="ECO:0000269" key="2">
    <source>
    </source>
</evidence>
<evidence type="ECO:0000269" key="3">
    <source>
    </source>
</evidence>
<evidence type="ECO:0000269" key="4">
    <source>
    </source>
</evidence>
<evidence type="ECO:0000303" key="5">
    <source>
    </source>
</evidence>
<evidence type="ECO:0000303" key="6">
    <source>
    </source>
</evidence>
<evidence type="ECO:0000305" key="7"/>
<evidence type="ECO:0000305" key="8">
    <source>
    </source>
</evidence>
<evidence type="ECO:0007829" key="9">
    <source>
        <dbReference type="PDB" id="1ZYL"/>
    </source>
</evidence>
<keyword id="KW-0002">3D-structure</keyword>
<keyword id="KW-0067">ATP-binding</keyword>
<keyword id="KW-0963">Cytoplasm</keyword>
<keyword id="KW-0418">Kinase</keyword>
<keyword id="KW-0460">Magnesium</keyword>
<keyword id="KW-0479">Metal-binding</keyword>
<keyword id="KW-0547">Nucleotide-binding</keyword>
<keyword id="KW-0597">Phosphoprotein</keyword>
<keyword id="KW-1185">Reference proteome</keyword>
<keyword id="KW-0723">Serine/threonine-protein kinase</keyword>
<keyword id="KW-0346">Stress response</keyword>
<keyword id="KW-0808">Transferase</keyword>
<feature type="chain" id="PRO_0000209574" description="Stress response kinase A">
    <location>
        <begin position="1"/>
        <end position="328"/>
    </location>
</feature>
<feature type="active site" description="Proton acceptor" evidence="1 8">
    <location>
        <position position="201"/>
    </location>
</feature>
<feature type="active site" evidence="1 8">
    <location>
        <position position="217"/>
    </location>
</feature>
<feature type="binding site" evidence="1 8">
    <location>
        <position position="206"/>
    </location>
    <ligand>
        <name>Mg(2+)</name>
        <dbReference type="ChEBI" id="CHEBI:18420"/>
    </ligand>
</feature>
<feature type="binding site" evidence="1 8">
    <location>
        <position position="217"/>
    </location>
    <ligand>
        <name>Mg(2+)</name>
        <dbReference type="ChEBI" id="CHEBI:18420"/>
    </ligand>
</feature>
<feature type="site" description="ATP" evidence="1 8">
    <location>
        <position position="36"/>
    </location>
</feature>
<feature type="mutagenesis site" description="Partial loss of kinase activity, only partially protects bacteria against hyperlethal stress." evidence="3">
    <original>S</original>
    <variation>A</variation>
    <location>
        <position position="36"/>
    </location>
</feature>
<feature type="mutagenesis site" description="Loss of kinase activity; does not protect bacteria against hyperlethal stress." evidence="2 3">
    <original>D</original>
    <variation>A</variation>
    <location>
        <position position="217"/>
    </location>
</feature>
<feature type="helix" evidence="9">
    <location>
        <begin position="13"/>
        <end position="22"/>
    </location>
</feature>
<feature type="strand" evidence="9">
    <location>
        <begin position="32"/>
        <end position="34"/>
    </location>
</feature>
<feature type="strand" evidence="9">
    <location>
        <begin position="37"/>
        <end position="44"/>
    </location>
</feature>
<feature type="strand" evidence="9">
    <location>
        <begin position="52"/>
        <end position="57"/>
    </location>
</feature>
<feature type="turn" evidence="9">
    <location>
        <begin position="59"/>
        <end position="61"/>
    </location>
</feature>
<feature type="helix" evidence="9">
    <location>
        <begin position="64"/>
        <end position="79"/>
    </location>
</feature>
<feature type="strand" evidence="9">
    <location>
        <begin position="96"/>
        <end position="98"/>
    </location>
</feature>
<feature type="strand" evidence="9">
    <location>
        <begin position="101"/>
        <end position="107"/>
    </location>
</feature>
<feature type="helix" evidence="9">
    <location>
        <begin position="119"/>
        <end position="136"/>
    </location>
</feature>
<feature type="strand" evidence="9">
    <location>
        <begin position="142"/>
        <end position="144"/>
    </location>
</feature>
<feature type="helix" evidence="9">
    <location>
        <begin position="149"/>
        <end position="152"/>
    </location>
</feature>
<feature type="helix" evidence="9">
    <location>
        <begin position="154"/>
        <end position="161"/>
    </location>
</feature>
<feature type="strand" evidence="9">
    <location>
        <begin position="164"/>
        <end position="166"/>
    </location>
</feature>
<feature type="turn" evidence="9">
    <location>
        <begin position="168"/>
        <end position="170"/>
    </location>
</feature>
<feature type="helix" evidence="9">
    <location>
        <begin position="171"/>
        <end position="188"/>
    </location>
</feature>
<feature type="helix" evidence="9">
    <location>
        <begin position="204"/>
        <end position="206"/>
    </location>
</feature>
<feature type="strand" evidence="9">
    <location>
        <begin position="207"/>
        <end position="215"/>
    </location>
</feature>
<feature type="helix" evidence="9">
    <location>
        <begin position="228"/>
        <end position="231"/>
    </location>
</feature>
<feature type="helix" evidence="9">
    <location>
        <begin position="238"/>
        <end position="252"/>
    </location>
</feature>
<feature type="turn" evidence="9">
    <location>
        <begin position="253"/>
        <end position="255"/>
    </location>
</feature>
<feature type="helix" evidence="9">
    <location>
        <begin position="260"/>
        <end position="265"/>
    </location>
</feature>
<feature type="helix" evidence="9">
    <location>
        <begin position="266"/>
        <end position="283"/>
    </location>
</feature>
<feature type="turn" evidence="9">
    <location>
        <begin position="284"/>
        <end position="286"/>
    </location>
</feature>
<feature type="helix" evidence="9">
    <location>
        <begin position="289"/>
        <end position="293"/>
    </location>
</feature>
<feature type="helix" evidence="9">
    <location>
        <begin position="295"/>
        <end position="298"/>
    </location>
</feature>
<feature type="helix" evidence="9">
    <location>
        <begin position="300"/>
        <end position="316"/>
    </location>
</feature>
<proteinExistence type="evidence at protein level"/>
<organism>
    <name type="scientific">Escherichia coli (strain K12)</name>
    <dbReference type="NCBI Taxonomy" id="83333"/>
    <lineage>
        <taxon>Bacteria</taxon>
        <taxon>Pseudomonadati</taxon>
        <taxon>Pseudomonadota</taxon>
        <taxon>Gammaproteobacteria</taxon>
        <taxon>Enterobacterales</taxon>
        <taxon>Enterobacteriaceae</taxon>
        <taxon>Escherichia</taxon>
    </lineage>
</organism>
<sequence>MNNSAFTFQTLHPDTIMDALFEHGIRVDSGLTPLNSYENRVYQFQDEDRRRFVVKFYRPERWTADQILEEHQFALQLVNDEVPVAAPVAFNGQTLLNHQGFYFAVFPSVGGRQFEADNIDQMEAVGRYLGRMHQTGRKQLFIHRPTIGLNEYLIEPRKLFEDATLIPSGLKAAFLKATDELIAAVTAHWREDFTVLRLHGDCHAGNILWRDGPMFVDLDDARNGPAVQDLWMLLNGDKAEQRMQLETIIEAYEEFSEFDTAEIGLIEPLRAMRLVYYLAWLMRRWADPAFPKNFPWLTGEDYWLRQTATFIEQAKVLQEPPLQLTPMY</sequence>
<dbReference type="EC" id="2.7.11.1" evidence="1 2"/>
<dbReference type="EMBL" id="X80762">
    <property type="protein sequence ID" value="CAA56735.1"/>
    <property type="molecule type" value="Genomic_DNA"/>
</dbReference>
<dbReference type="EMBL" id="L19201">
    <property type="protein sequence ID" value="AAB02994.1"/>
    <property type="molecule type" value="Genomic_DNA"/>
</dbReference>
<dbReference type="EMBL" id="U00096">
    <property type="protein sequence ID" value="AAC76857.1"/>
    <property type="molecule type" value="Genomic_DNA"/>
</dbReference>
<dbReference type="EMBL" id="AP009048">
    <property type="protein sequence ID" value="BAE77449.1"/>
    <property type="molecule type" value="Genomic_DNA"/>
</dbReference>
<dbReference type="PIR" id="S40805">
    <property type="entry name" value="S40805"/>
</dbReference>
<dbReference type="RefSeq" id="NP_418296.1">
    <property type="nucleotide sequence ID" value="NC_000913.3"/>
</dbReference>
<dbReference type="RefSeq" id="WP_001065497.1">
    <property type="nucleotide sequence ID" value="NZ_SSZK01000026.1"/>
</dbReference>
<dbReference type="PDB" id="1ZYL">
    <property type="method" value="X-ray"/>
    <property type="resolution" value="2.80 A"/>
    <property type="chains" value="A=1-328"/>
</dbReference>
<dbReference type="PDBsum" id="1ZYL"/>
<dbReference type="SMR" id="P0C0K3"/>
<dbReference type="BioGRID" id="4261338">
    <property type="interactions" value="8"/>
</dbReference>
<dbReference type="FunCoup" id="P0C0K3">
    <property type="interactions" value="138"/>
</dbReference>
<dbReference type="IntAct" id="P0C0K3">
    <property type="interactions" value="5"/>
</dbReference>
<dbReference type="STRING" id="511145.b3859"/>
<dbReference type="jPOST" id="P0C0K3"/>
<dbReference type="PaxDb" id="511145-b3859"/>
<dbReference type="EnsemblBacteria" id="AAC76857">
    <property type="protein sequence ID" value="AAC76857"/>
    <property type="gene ID" value="b3859"/>
</dbReference>
<dbReference type="GeneID" id="948346"/>
<dbReference type="KEGG" id="ecj:JW3831"/>
<dbReference type="KEGG" id="eco:b3859"/>
<dbReference type="KEGG" id="ecoc:C3026_20860"/>
<dbReference type="PATRIC" id="fig|511145.12.peg.3968"/>
<dbReference type="EchoBASE" id="EB1778"/>
<dbReference type="eggNOG" id="COG2334">
    <property type="taxonomic scope" value="Bacteria"/>
</dbReference>
<dbReference type="HOGENOM" id="CLU_054715_0_0_6"/>
<dbReference type="InParanoid" id="P0C0K3"/>
<dbReference type="OMA" id="MHYSAWL"/>
<dbReference type="OrthoDB" id="5392197at2"/>
<dbReference type="PhylomeDB" id="P0C0K3"/>
<dbReference type="BioCyc" id="EcoCyc:EG11831-MONOMER"/>
<dbReference type="BioCyc" id="MetaCyc:EG11831-MONOMER"/>
<dbReference type="EvolutionaryTrace" id="P0C0K3"/>
<dbReference type="PRO" id="PR:P0C0K3"/>
<dbReference type="Proteomes" id="UP000000625">
    <property type="component" value="Chromosome"/>
</dbReference>
<dbReference type="GO" id="GO:0005737">
    <property type="term" value="C:cytoplasm"/>
    <property type="evidence" value="ECO:0000269"/>
    <property type="project" value="EcoCyc"/>
</dbReference>
<dbReference type="GO" id="GO:0005524">
    <property type="term" value="F:ATP binding"/>
    <property type="evidence" value="ECO:0007669"/>
    <property type="project" value="UniProtKB-UniRule"/>
</dbReference>
<dbReference type="GO" id="GO:0000287">
    <property type="term" value="F:magnesium ion binding"/>
    <property type="evidence" value="ECO:0007669"/>
    <property type="project" value="UniProtKB-UniRule"/>
</dbReference>
<dbReference type="GO" id="GO:0106310">
    <property type="term" value="F:protein serine kinase activity"/>
    <property type="evidence" value="ECO:0007669"/>
    <property type="project" value="RHEA"/>
</dbReference>
<dbReference type="GO" id="GO:0004674">
    <property type="term" value="F:protein serine/threonine kinase activity"/>
    <property type="evidence" value="ECO:0000314"/>
    <property type="project" value="EcoCyc"/>
</dbReference>
<dbReference type="GO" id="GO:0006950">
    <property type="term" value="P:response to stress"/>
    <property type="evidence" value="ECO:0000315"/>
    <property type="project" value="EcoCyc"/>
</dbReference>
<dbReference type="Gene3D" id="1.20.1270.170">
    <property type="match status" value="1"/>
</dbReference>
<dbReference type="Gene3D" id="3.30.200.70">
    <property type="match status" value="1"/>
</dbReference>
<dbReference type="Gene3D" id="1.10.510.10">
    <property type="entry name" value="Transferase(Phosphotransferase) domain 1"/>
    <property type="match status" value="1"/>
</dbReference>
<dbReference type="HAMAP" id="MF_01497">
    <property type="entry name" value="SrkA_kinase"/>
    <property type="match status" value="1"/>
</dbReference>
<dbReference type="InterPro" id="IPR002575">
    <property type="entry name" value="Aminoglycoside_PTrfase"/>
</dbReference>
<dbReference type="InterPro" id="IPR011009">
    <property type="entry name" value="Kinase-like_dom_sf"/>
</dbReference>
<dbReference type="InterPro" id="IPR032882">
    <property type="entry name" value="SrkA/RdoA"/>
</dbReference>
<dbReference type="NCBIfam" id="NF008738">
    <property type="entry name" value="PRK11768.1"/>
    <property type="match status" value="1"/>
</dbReference>
<dbReference type="PANTHER" id="PTHR39573">
    <property type="entry name" value="STRESS RESPONSE KINASE A"/>
    <property type="match status" value="1"/>
</dbReference>
<dbReference type="PANTHER" id="PTHR39573:SF1">
    <property type="entry name" value="STRESS RESPONSE KINASE A"/>
    <property type="match status" value="1"/>
</dbReference>
<dbReference type="Pfam" id="PF01636">
    <property type="entry name" value="APH"/>
    <property type="match status" value="1"/>
</dbReference>
<dbReference type="SUPFAM" id="SSF56112">
    <property type="entry name" value="Protein kinase-like (PK-like)"/>
    <property type="match status" value="1"/>
</dbReference>
<accession>P0C0K3</accession>
<accession>P32127</accession>
<accession>Q2M8F7</accession>